<comment type="function">
    <text evidence="1">Can catalyze the hydrolysis of ATP in the presence of single-stranded DNA, the ATP-dependent uptake of single-stranded DNA by duplex DNA, and the ATP-dependent hybridization of homologous single-stranded DNAs. It interacts with LexA causing its activation and leading to its autocatalytic cleavage.</text>
</comment>
<comment type="subcellular location">
    <subcellularLocation>
        <location evidence="1">Cytoplasm</location>
    </subcellularLocation>
</comment>
<comment type="similarity">
    <text evidence="1">Belongs to the RecA family.</text>
</comment>
<dbReference type="EMBL" id="CP000927">
    <property type="protein sequence ID" value="ABZ70522.1"/>
    <property type="molecule type" value="Genomic_DNA"/>
</dbReference>
<dbReference type="SMR" id="B0SZN2"/>
<dbReference type="STRING" id="366602.Caul_1392"/>
<dbReference type="KEGG" id="cak:Caul_1392"/>
<dbReference type="eggNOG" id="COG0468">
    <property type="taxonomic scope" value="Bacteria"/>
</dbReference>
<dbReference type="HOGENOM" id="CLU_040469_3_2_5"/>
<dbReference type="OrthoDB" id="9776733at2"/>
<dbReference type="GO" id="GO:0005829">
    <property type="term" value="C:cytosol"/>
    <property type="evidence" value="ECO:0007669"/>
    <property type="project" value="TreeGrafter"/>
</dbReference>
<dbReference type="GO" id="GO:0005524">
    <property type="term" value="F:ATP binding"/>
    <property type="evidence" value="ECO:0007669"/>
    <property type="project" value="UniProtKB-UniRule"/>
</dbReference>
<dbReference type="GO" id="GO:0016887">
    <property type="term" value="F:ATP hydrolysis activity"/>
    <property type="evidence" value="ECO:0007669"/>
    <property type="project" value="InterPro"/>
</dbReference>
<dbReference type="GO" id="GO:0140664">
    <property type="term" value="F:ATP-dependent DNA damage sensor activity"/>
    <property type="evidence" value="ECO:0007669"/>
    <property type="project" value="InterPro"/>
</dbReference>
<dbReference type="GO" id="GO:0003684">
    <property type="term" value="F:damaged DNA binding"/>
    <property type="evidence" value="ECO:0007669"/>
    <property type="project" value="UniProtKB-UniRule"/>
</dbReference>
<dbReference type="GO" id="GO:0003697">
    <property type="term" value="F:single-stranded DNA binding"/>
    <property type="evidence" value="ECO:0007669"/>
    <property type="project" value="UniProtKB-UniRule"/>
</dbReference>
<dbReference type="GO" id="GO:0006310">
    <property type="term" value="P:DNA recombination"/>
    <property type="evidence" value="ECO:0007669"/>
    <property type="project" value="UniProtKB-UniRule"/>
</dbReference>
<dbReference type="GO" id="GO:0006281">
    <property type="term" value="P:DNA repair"/>
    <property type="evidence" value="ECO:0007669"/>
    <property type="project" value="UniProtKB-UniRule"/>
</dbReference>
<dbReference type="GO" id="GO:0009432">
    <property type="term" value="P:SOS response"/>
    <property type="evidence" value="ECO:0007669"/>
    <property type="project" value="UniProtKB-UniRule"/>
</dbReference>
<dbReference type="CDD" id="cd00983">
    <property type="entry name" value="RecA"/>
    <property type="match status" value="1"/>
</dbReference>
<dbReference type="FunFam" id="3.40.50.300:FF:000087">
    <property type="entry name" value="Recombinase RecA"/>
    <property type="match status" value="1"/>
</dbReference>
<dbReference type="Gene3D" id="3.40.50.300">
    <property type="entry name" value="P-loop containing nucleotide triphosphate hydrolases"/>
    <property type="match status" value="1"/>
</dbReference>
<dbReference type="HAMAP" id="MF_00268">
    <property type="entry name" value="RecA"/>
    <property type="match status" value="1"/>
</dbReference>
<dbReference type="InterPro" id="IPR003593">
    <property type="entry name" value="AAA+_ATPase"/>
</dbReference>
<dbReference type="InterPro" id="IPR013765">
    <property type="entry name" value="DNA_recomb/repair_RecA"/>
</dbReference>
<dbReference type="InterPro" id="IPR020584">
    <property type="entry name" value="DNA_recomb/repair_RecA_CS"/>
</dbReference>
<dbReference type="InterPro" id="IPR027417">
    <property type="entry name" value="P-loop_NTPase"/>
</dbReference>
<dbReference type="InterPro" id="IPR049261">
    <property type="entry name" value="RecA-like_C"/>
</dbReference>
<dbReference type="InterPro" id="IPR049428">
    <property type="entry name" value="RecA-like_N"/>
</dbReference>
<dbReference type="InterPro" id="IPR020588">
    <property type="entry name" value="RecA_ATP-bd"/>
</dbReference>
<dbReference type="InterPro" id="IPR023400">
    <property type="entry name" value="RecA_C_sf"/>
</dbReference>
<dbReference type="InterPro" id="IPR020587">
    <property type="entry name" value="RecA_monomer-monomer_interface"/>
</dbReference>
<dbReference type="NCBIfam" id="TIGR02012">
    <property type="entry name" value="tigrfam_recA"/>
    <property type="match status" value="1"/>
</dbReference>
<dbReference type="PANTHER" id="PTHR45900:SF1">
    <property type="entry name" value="MITOCHONDRIAL DNA REPAIR PROTEIN RECA HOMOLOG-RELATED"/>
    <property type="match status" value="1"/>
</dbReference>
<dbReference type="PANTHER" id="PTHR45900">
    <property type="entry name" value="RECA"/>
    <property type="match status" value="1"/>
</dbReference>
<dbReference type="Pfam" id="PF00154">
    <property type="entry name" value="RecA"/>
    <property type="match status" value="1"/>
</dbReference>
<dbReference type="Pfam" id="PF21096">
    <property type="entry name" value="RecA_C"/>
    <property type="match status" value="1"/>
</dbReference>
<dbReference type="PRINTS" id="PR00142">
    <property type="entry name" value="RECA"/>
</dbReference>
<dbReference type="SMART" id="SM00382">
    <property type="entry name" value="AAA"/>
    <property type="match status" value="1"/>
</dbReference>
<dbReference type="SUPFAM" id="SSF52540">
    <property type="entry name" value="P-loop containing nucleoside triphosphate hydrolases"/>
    <property type="match status" value="1"/>
</dbReference>
<dbReference type="SUPFAM" id="SSF54752">
    <property type="entry name" value="RecA protein, C-terminal domain"/>
    <property type="match status" value="1"/>
</dbReference>
<dbReference type="PROSITE" id="PS00321">
    <property type="entry name" value="RECA_1"/>
    <property type="match status" value="1"/>
</dbReference>
<dbReference type="PROSITE" id="PS50162">
    <property type="entry name" value="RECA_2"/>
    <property type="match status" value="1"/>
</dbReference>
<dbReference type="PROSITE" id="PS50163">
    <property type="entry name" value="RECA_3"/>
    <property type="match status" value="1"/>
</dbReference>
<accession>B0SZN2</accession>
<reference key="1">
    <citation type="submission" date="2008-01" db="EMBL/GenBank/DDBJ databases">
        <title>Complete sequence of chromosome of Caulobacter sp. K31.</title>
        <authorList>
            <consortium name="US DOE Joint Genome Institute"/>
            <person name="Copeland A."/>
            <person name="Lucas S."/>
            <person name="Lapidus A."/>
            <person name="Barry K."/>
            <person name="Glavina del Rio T."/>
            <person name="Dalin E."/>
            <person name="Tice H."/>
            <person name="Pitluck S."/>
            <person name="Bruce D."/>
            <person name="Goodwin L."/>
            <person name="Thompson L.S."/>
            <person name="Brettin T."/>
            <person name="Detter J.C."/>
            <person name="Han C."/>
            <person name="Schmutz J."/>
            <person name="Larimer F."/>
            <person name="Land M."/>
            <person name="Hauser L."/>
            <person name="Kyrpides N."/>
            <person name="Kim E."/>
            <person name="Stephens C."/>
            <person name="Richardson P."/>
        </authorList>
    </citation>
    <scope>NUCLEOTIDE SEQUENCE [LARGE SCALE GENOMIC DNA]</scope>
    <source>
        <strain>K31</strain>
    </source>
</reference>
<keyword id="KW-0067">ATP-binding</keyword>
<keyword id="KW-0963">Cytoplasm</keyword>
<keyword id="KW-0227">DNA damage</keyword>
<keyword id="KW-0233">DNA recombination</keyword>
<keyword id="KW-0234">DNA repair</keyword>
<keyword id="KW-0238">DNA-binding</keyword>
<keyword id="KW-0547">Nucleotide-binding</keyword>
<keyword id="KW-0742">SOS response</keyword>
<organism>
    <name type="scientific">Caulobacter sp. (strain K31)</name>
    <dbReference type="NCBI Taxonomy" id="366602"/>
    <lineage>
        <taxon>Bacteria</taxon>
        <taxon>Pseudomonadati</taxon>
        <taxon>Pseudomonadota</taxon>
        <taxon>Alphaproteobacteria</taxon>
        <taxon>Caulobacterales</taxon>
        <taxon>Caulobacteraceae</taxon>
        <taxon>Caulobacter</taxon>
    </lineage>
</organism>
<sequence>MSNQAALKLVGKEDGDKQRALEAALAQIDRAFGKGSVMKLGEKGKVEMESISTGSLGLDIALGIGGLPKGRVIEIYGPESSGKTTLALHVVAECQKAGGTAAFVDAEHALDPGYAFKLGVNLDNLLVSQPDNGEQALEITDTLVRSGAVDIVVIDSVAALTPKAEIEGEMGDSLPGLQARLMSQALRKLTASINKANTIVIFINQIRHKIGVMYGSPETTTGGNALKFYASVRLDIRRTGSIKNRDEIVGNNVRVKVVKNKVAPPFREVEFDIMYGEGISKLGEIIDLGVKAGIIDKAGSWFSYNSQRIGQGRDNVREFLKVNKDLAAEIEAAVRKSSQKIEEELLVGGPEDGDDE</sequence>
<gene>
    <name evidence="1" type="primary">recA</name>
    <name type="ordered locus">Caul_1392</name>
</gene>
<feature type="chain" id="PRO_1000078665" description="Protein RecA">
    <location>
        <begin position="1"/>
        <end position="356"/>
    </location>
</feature>
<feature type="binding site" evidence="1">
    <location>
        <begin position="77"/>
        <end position="84"/>
    </location>
    <ligand>
        <name>ATP</name>
        <dbReference type="ChEBI" id="CHEBI:30616"/>
    </ligand>
</feature>
<protein>
    <recommendedName>
        <fullName evidence="1">Protein RecA</fullName>
    </recommendedName>
    <alternativeName>
        <fullName evidence="1">Recombinase A</fullName>
    </alternativeName>
</protein>
<name>RECA_CAUSK</name>
<proteinExistence type="inferred from homology"/>
<evidence type="ECO:0000255" key="1">
    <source>
        <dbReference type="HAMAP-Rule" id="MF_00268"/>
    </source>
</evidence>